<dbReference type="EMBL" id="CH476605">
    <property type="protein sequence ID" value="EAU31214.1"/>
    <property type="molecule type" value="Genomic_DNA"/>
</dbReference>
<dbReference type="RefSeq" id="XP_001216662.1">
    <property type="nucleotide sequence ID" value="XM_001216662.1"/>
</dbReference>
<dbReference type="SMR" id="Q0CE43"/>
<dbReference type="STRING" id="341663.Q0CE43"/>
<dbReference type="EnsemblFungi" id="EAU31214">
    <property type="protein sequence ID" value="EAU31214"/>
    <property type="gene ID" value="ATEG_08041"/>
</dbReference>
<dbReference type="GeneID" id="4353357"/>
<dbReference type="VEuPathDB" id="FungiDB:ATEG_08041"/>
<dbReference type="eggNOG" id="KOG1471">
    <property type="taxonomic scope" value="Eukaryota"/>
</dbReference>
<dbReference type="HOGENOM" id="CLU_045138_1_0_1"/>
<dbReference type="OMA" id="MVQIHDY"/>
<dbReference type="OrthoDB" id="75724at2759"/>
<dbReference type="Proteomes" id="UP000007963">
    <property type="component" value="Unassembled WGS sequence"/>
</dbReference>
<dbReference type="GO" id="GO:0032541">
    <property type="term" value="C:cortical endoplasmic reticulum"/>
    <property type="evidence" value="ECO:0007669"/>
    <property type="project" value="TreeGrafter"/>
</dbReference>
<dbReference type="GO" id="GO:0005829">
    <property type="term" value="C:cytosol"/>
    <property type="evidence" value="ECO:0007669"/>
    <property type="project" value="TreeGrafter"/>
</dbReference>
<dbReference type="GO" id="GO:0005789">
    <property type="term" value="C:endoplasmic reticulum membrane"/>
    <property type="evidence" value="ECO:0007669"/>
    <property type="project" value="UniProtKB-SubCell"/>
</dbReference>
<dbReference type="GO" id="GO:0005886">
    <property type="term" value="C:plasma membrane"/>
    <property type="evidence" value="ECO:0007669"/>
    <property type="project" value="TreeGrafter"/>
</dbReference>
<dbReference type="GO" id="GO:0046872">
    <property type="term" value="F:metal ion binding"/>
    <property type="evidence" value="ECO:0007669"/>
    <property type="project" value="UniProtKB-KW"/>
</dbReference>
<dbReference type="GO" id="GO:0008526">
    <property type="term" value="F:phosphatidylinositol transfer activity"/>
    <property type="evidence" value="ECO:0007669"/>
    <property type="project" value="InterPro"/>
</dbReference>
<dbReference type="GO" id="GO:0043001">
    <property type="term" value="P:Golgi to plasma membrane protein transport"/>
    <property type="evidence" value="ECO:0007669"/>
    <property type="project" value="TreeGrafter"/>
</dbReference>
<dbReference type="GO" id="GO:0017157">
    <property type="term" value="P:regulation of exocytosis"/>
    <property type="evidence" value="ECO:0007669"/>
    <property type="project" value="TreeGrafter"/>
</dbReference>
<dbReference type="CDD" id="cd00170">
    <property type="entry name" value="SEC14"/>
    <property type="match status" value="1"/>
</dbReference>
<dbReference type="FunFam" id="3.40.525.10:FF:000017">
    <property type="entry name" value="Phosphatidylinositol transfer protein sfh5"/>
    <property type="match status" value="1"/>
</dbReference>
<dbReference type="Gene3D" id="3.40.525.10">
    <property type="entry name" value="CRAL-TRIO lipid binding domain"/>
    <property type="match status" value="1"/>
</dbReference>
<dbReference type="InterPro" id="IPR001251">
    <property type="entry name" value="CRAL-TRIO_dom"/>
</dbReference>
<dbReference type="InterPro" id="IPR036865">
    <property type="entry name" value="CRAL-TRIO_dom_sf"/>
</dbReference>
<dbReference type="InterPro" id="IPR011074">
    <property type="entry name" value="CRAL/TRIO_N_dom"/>
</dbReference>
<dbReference type="InterPro" id="IPR036273">
    <property type="entry name" value="CRAL/TRIO_N_dom_sf"/>
</dbReference>
<dbReference type="InterPro" id="IPR042938">
    <property type="entry name" value="Sfh5"/>
</dbReference>
<dbReference type="PANTHER" id="PTHR47669">
    <property type="entry name" value="PHOSPHATIDYLINOSITOL TRANSFER PROTEIN SFH5"/>
    <property type="match status" value="1"/>
</dbReference>
<dbReference type="PANTHER" id="PTHR47669:SF1">
    <property type="entry name" value="PHOSPHATIDYLINOSITOL TRANSFER PROTEIN SFH5"/>
    <property type="match status" value="1"/>
</dbReference>
<dbReference type="Pfam" id="PF00650">
    <property type="entry name" value="CRAL_TRIO"/>
    <property type="match status" value="1"/>
</dbReference>
<dbReference type="Pfam" id="PF03765">
    <property type="entry name" value="CRAL_TRIO_N"/>
    <property type="match status" value="1"/>
</dbReference>
<dbReference type="SMART" id="SM00516">
    <property type="entry name" value="SEC14"/>
    <property type="match status" value="1"/>
</dbReference>
<dbReference type="SUPFAM" id="SSF52087">
    <property type="entry name" value="CRAL/TRIO domain"/>
    <property type="match status" value="1"/>
</dbReference>
<dbReference type="SUPFAM" id="SSF46938">
    <property type="entry name" value="CRAL/TRIO N-terminal domain"/>
    <property type="match status" value="1"/>
</dbReference>
<dbReference type="PROSITE" id="PS50191">
    <property type="entry name" value="CRAL_TRIO"/>
    <property type="match status" value="1"/>
</dbReference>
<organism>
    <name type="scientific">Aspergillus terreus (strain NIH 2624 / FGSC A1156)</name>
    <dbReference type="NCBI Taxonomy" id="341663"/>
    <lineage>
        <taxon>Eukaryota</taxon>
        <taxon>Fungi</taxon>
        <taxon>Dikarya</taxon>
        <taxon>Ascomycota</taxon>
        <taxon>Pezizomycotina</taxon>
        <taxon>Eurotiomycetes</taxon>
        <taxon>Eurotiomycetidae</taxon>
        <taxon>Eurotiales</taxon>
        <taxon>Aspergillaceae</taxon>
        <taxon>Aspergillus</taxon>
        <taxon>Aspergillus subgen. Circumdati</taxon>
    </lineage>
</organism>
<protein>
    <recommendedName>
        <fullName>Phosphatidylinositol transfer protein sfh5</fullName>
        <shortName>PITP sfh5</shortName>
    </recommendedName>
</protein>
<proteinExistence type="inferred from homology"/>
<sequence length="424" mass="46889">MSEQEKTPPAAAEPQPPVDNKPTDAPAQPEHPPTDGNDKTEQPATEAAPAEAPTEQPKQDDAAQPADNKPDYLAKNPALSEFFDRLPAILSSAGHNEMWGVTLRDSADVPTVNVMIKFLRANEGNVKQAEDQLIKALQWRKEMDPTALVDTASYSASKFGGLGYLTTYQDANGKETVVTWNIYGAVKKIDETFGNMDEFLKWRVALMEMAVKELKMDQATTVMDYNADEDPYQMLQVHDYLNVSFLRINPNLRAATKKTIEVFAMAYPELLREKFFVNVPAIMGWMFAAMKVFLSKNTTRKFHPISNGANLAREFPSPLKDQFPKAYGGNGPALQDNARTVNLVADPEPAQEASKDEAQEAPKDAPKEEPKEEPKEEPKEEPKEEPKEEPKEESKAETTQESADAPEKNDAAVTEAPAPAAEAK</sequence>
<name>SFH5_ASPTN</name>
<accession>Q0CE43</accession>
<feature type="chain" id="PRO_0000324971" description="Phosphatidylinositol transfer protein sfh5">
    <location>
        <begin position="1"/>
        <end position="424"/>
    </location>
</feature>
<feature type="domain" description="CRAL-TRIO" evidence="3">
    <location>
        <begin position="152"/>
        <end position="335"/>
    </location>
</feature>
<feature type="region of interest" description="Disordered" evidence="4">
    <location>
        <begin position="1"/>
        <end position="74"/>
    </location>
</feature>
<feature type="region of interest" description="Disordered" evidence="4">
    <location>
        <begin position="348"/>
        <end position="424"/>
    </location>
</feature>
<feature type="compositionally biased region" description="Basic and acidic residues" evidence="4">
    <location>
        <begin position="32"/>
        <end position="41"/>
    </location>
</feature>
<feature type="compositionally biased region" description="Low complexity" evidence="4">
    <location>
        <begin position="42"/>
        <end position="56"/>
    </location>
</feature>
<feature type="compositionally biased region" description="Basic and acidic residues" evidence="4">
    <location>
        <begin position="353"/>
        <end position="398"/>
    </location>
</feature>
<feature type="compositionally biased region" description="Low complexity" evidence="4">
    <location>
        <begin position="411"/>
        <end position="424"/>
    </location>
</feature>
<feature type="binding site" evidence="1">
    <location>
        <position position="183"/>
    </location>
    <ligand>
        <name>heme</name>
        <dbReference type="ChEBI" id="CHEBI:30413"/>
    </ligand>
</feature>
<feature type="binding site" evidence="1">
    <location>
        <position position="203"/>
    </location>
    <ligand>
        <name>heme</name>
        <dbReference type="ChEBI" id="CHEBI:30413"/>
    </ligand>
</feature>
<feature type="binding site" evidence="1">
    <location>
        <position position="238"/>
    </location>
    <ligand>
        <name>heme</name>
        <dbReference type="ChEBI" id="CHEBI:30413"/>
    </ligand>
</feature>
<feature type="binding site" description="proximal binding residue" evidence="1">
    <location>
        <position position="240"/>
    </location>
    <ligand>
        <name>heme</name>
        <dbReference type="ChEBI" id="CHEBI:30413"/>
    </ligand>
    <ligandPart>
        <name>Fe</name>
        <dbReference type="ChEBI" id="CHEBI:18248"/>
    </ligandPart>
</feature>
<feature type="binding site" evidence="1">
    <location>
        <position position="274"/>
    </location>
    <ligand>
        <name>heme</name>
        <dbReference type="ChEBI" id="CHEBI:30413"/>
    </ligand>
</feature>
<keyword id="KW-0963">Cytoplasm</keyword>
<keyword id="KW-0256">Endoplasmic reticulum</keyword>
<keyword id="KW-0349">Heme</keyword>
<keyword id="KW-0408">Iron</keyword>
<keyword id="KW-0445">Lipid transport</keyword>
<keyword id="KW-0472">Membrane</keyword>
<keyword id="KW-0479">Metal-binding</keyword>
<keyword id="KW-0492">Microsome</keyword>
<keyword id="KW-1185">Reference proteome</keyword>
<keyword id="KW-0813">Transport</keyword>
<reference key="1">
    <citation type="submission" date="2005-09" db="EMBL/GenBank/DDBJ databases">
        <title>Annotation of the Aspergillus terreus NIH2624 genome.</title>
        <authorList>
            <person name="Birren B.W."/>
            <person name="Lander E.S."/>
            <person name="Galagan J.E."/>
            <person name="Nusbaum C."/>
            <person name="Devon K."/>
            <person name="Henn M."/>
            <person name="Ma L.-J."/>
            <person name="Jaffe D.B."/>
            <person name="Butler J."/>
            <person name="Alvarez P."/>
            <person name="Gnerre S."/>
            <person name="Grabherr M."/>
            <person name="Kleber M."/>
            <person name="Mauceli E.W."/>
            <person name="Brockman W."/>
            <person name="Rounsley S."/>
            <person name="Young S.K."/>
            <person name="LaButti K."/>
            <person name="Pushparaj V."/>
            <person name="DeCaprio D."/>
            <person name="Crawford M."/>
            <person name="Koehrsen M."/>
            <person name="Engels R."/>
            <person name="Montgomery P."/>
            <person name="Pearson M."/>
            <person name="Howarth C."/>
            <person name="Larson L."/>
            <person name="Luoma S."/>
            <person name="White J."/>
            <person name="Alvarado L."/>
            <person name="Kodira C.D."/>
            <person name="Zeng Q."/>
            <person name="Oleary S."/>
            <person name="Yandava C."/>
            <person name="Denning D.W."/>
            <person name="Nierman W.C."/>
            <person name="Milne T."/>
            <person name="Madden K."/>
        </authorList>
    </citation>
    <scope>NUCLEOTIDE SEQUENCE [LARGE SCALE GENOMIC DNA]</scope>
    <source>
        <strain>NIH 2624 / FGSC A1156</strain>
    </source>
</reference>
<evidence type="ECO:0000250" key="1">
    <source>
        <dbReference type="UniProtKB" id="A6ZQI5"/>
    </source>
</evidence>
<evidence type="ECO:0000250" key="2">
    <source>
        <dbReference type="UniProtKB" id="P47008"/>
    </source>
</evidence>
<evidence type="ECO:0000255" key="3">
    <source>
        <dbReference type="PROSITE-ProRule" id="PRU00056"/>
    </source>
</evidence>
<evidence type="ECO:0000256" key="4">
    <source>
        <dbReference type="SAM" id="MobiDB-lite"/>
    </source>
</evidence>
<evidence type="ECO:0000305" key="5"/>
<gene>
    <name type="primary">sfh5</name>
    <name type="ORF">ATEG_08041</name>
</gene>
<comment type="function">
    <text evidence="2">Non-classical phosphatidylinositol (PtdIns) transfer protein (PITP), which exhibits PtdIns-binding/transfer activity in the absence of detectable PtdCho-binding/transfer activity. Regulates PtdIns(4,5)P2 homeostasis at the plasma membrane. Heme-binding protein that may play a role in organic oxidant-induced stress responses.</text>
</comment>
<comment type="catalytic activity">
    <reaction evidence="2">
        <text>a 1,2-diacyl-sn-glycero-3-phospho-(1D-myo-inositol)(in) = a 1,2-diacyl-sn-glycero-3-phospho-(1D-myo-inositol)(out)</text>
        <dbReference type="Rhea" id="RHEA:38691"/>
        <dbReference type="ChEBI" id="CHEBI:57880"/>
    </reaction>
    <physiologicalReaction direction="left-to-right" evidence="2">
        <dbReference type="Rhea" id="RHEA:38692"/>
    </physiologicalReaction>
</comment>
<comment type="cofactor">
    <cofactor evidence="1">
        <name>heme b</name>
        <dbReference type="ChEBI" id="CHEBI:60344"/>
    </cofactor>
</comment>
<comment type="subcellular location">
    <subcellularLocation>
        <location evidence="2">Cytoplasm</location>
    </subcellularLocation>
    <subcellularLocation>
        <location evidence="2">Endoplasmic reticulum membrane</location>
        <topology evidence="2">Peripheral membrane protein</topology>
    </subcellularLocation>
    <subcellularLocation>
        <location evidence="2">Microsome membrane</location>
        <topology evidence="2">Peripheral membrane protein</topology>
    </subcellularLocation>
</comment>
<comment type="similarity">
    <text evidence="5">Belongs to the SFH5 family.</text>
</comment>